<accession>Q1QKV7</accession>
<proteinExistence type="inferred from homology"/>
<comment type="function">
    <text evidence="1">Essential for recycling GMP and indirectly, cGMP.</text>
</comment>
<comment type="catalytic activity">
    <reaction evidence="1">
        <text>GMP + ATP = GDP + ADP</text>
        <dbReference type="Rhea" id="RHEA:20780"/>
        <dbReference type="ChEBI" id="CHEBI:30616"/>
        <dbReference type="ChEBI" id="CHEBI:58115"/>
        <dbReference type="ChEBI" id="CHEBI:58189"/>
        <dbReference type="ChEBI" id="CHEBI:456216"/>
        <dbReference type="EC" id="2.7.4.8"/>
    </reaction>
</comment>
<comment type="subcellular location">
    <subcellularLocation>
        <location evidence="1">Cytoplasm</location>
    </subcellularLocation>
</comment>
<comment type="similarity">
    <text evidence="1">Belongs to the guanylate kinase family.</text>
</comment>
<sequence length="219" mass="24781">MAAHGQGFDGVERRGLMFVLSSPSGAGKTTLSRLLIERVEGLSLSVSATTRPMRPGEVDGRDYRFVDKATFAVMVKCDELLEWATVFDNRYGTPRAPVEAALSSGRDVLFDIDWQGTQQLREKARADVVSVFILPPSATDLERRLHTRAQDSDEVIRGRMDRAAHELSHWAEYDYIVINQDIDEAFAEVQSILKAERLKRERRTGLTAFVRELQRQLEN</sequence>
<protein>
    <recommendedName>
        <fullName evidence="1">Guanylate kinase</fullName>
        <ecNumber evidence="1">2.7.4.8</ecNumber>
    </recommendedName>
    <alternativeName>
        <fullName evidence="1">GMP kinase</fullName>
    </alternativeName>
</protein>
<name>KGUA_NITHX</name>
<reference key="1">
    <citation type="submission" date="2006-03" db="EMBL/GenBank/DDBJ databases">
        <title>Complete sequence of chromosome of Nitrobacter hamburgensis X14.</title>
        <authorList>
            <consortium name="US DOE Joint Genome Institute"/>
            <person name="Copeland A."/>
            <person name="Lucas S."/>
            <person name="Lapidus A."/>
            <person name="Barry K."/>
            <person name="Detter J.C."/>
            <person name="Glavina del Rio T."/>
            <person name="Hammon N."/>
            <person name="Israni S."/>
            <person name="Dalin E."/>
            <person name="Tice H."/>
            <person name="Pitluck S."/>
            <person name="Chain P."/>
            <person name="Malfatti S."/>
            <person name="Shin M."/>
            <person name="Vergez L."/>
            <person name="Schmutz J."/>
            <person name="Larimer F."/>
            <person name="Land M."/>
            <person name="Hauser L."/>
            <person name="Kyrpides N."/>
            <person name="Ivanova N."/>
            <person name="Ward B."/>
            <person name="Arp D."/>
            <person name="Klotz M."/>
            <person name="Stein L."/>
            <person name="O'Mullan G."/>
            <person name="Starkenburg S."/>
            <person name="Sayavedra L."/>
            <person name="Poret-Peterson A.T."/>
            <person name="Gentry M.E."/>
            <person name="Bruce D."/>
            <person name="Richardson P."/>
        </authorList>
    </citation>
    <scope>NUCLEOTIDE SEQUENCE [LARGE SCALE GENOMIC DNA]</scope>
    <source>
        <strain>DSM 10229 / NCIMB 13809 / X14</strain>
    </source>
</reference>
<gene>
    <name evidence="1" type="primary">gmk</name>
    <name type="ordered locus">Nham_2348</name>
</gene>
<evidence type="ECO:0000255" key="1">
    <source>
        <dbReference type="HAMAP-Rule" id="MF_00328"/>
    </source>
</evidence>
<organism>
    <name type="scientific">Nitrobacter hamburgensis (strain DSM 10229 / NCIMB 13809 / X14)</name>
    <dbReference type="NCBI Taxonomy" id="323097"/>
    <lineage>
        <taxon>Bacteria</taxon>
        <taxon>Pseudomonadati</taxon>
        <taxon>Pseudomonadota</taxon>
        <taxon>Alphaproteobacteria</taxon>
        <taxon>Hyphomicrobiales</taxon>
        <taxon>Nitrobacteraceae</taxon>
        <taxon>Nitrobacter</taxon>
    </lineage>
</organism>
<dbReference type="EC" id="2.7.4.8" evidence="1"/>
<dbReference type="EMBL" id="CP000319">
    <property type="protein sequence ID" value="ABE63140.1"/>
    <property type="molecule type" value="Genomic_DNA"/>
</dbReference>
<dbReference type="RefSeq" id="WP_011510816.1">
    <property type="nucleotide sequence ID" value="NC_007964.1"/>
</dbReference>
<dbReference type="SMR" id="Q1QKV7"/>
<dbReference type="STRING" id="323097.Nham_2348"/>
<dbReference type="KEGG" id="nha:Nham_2348"/>
<dbReference type="eggNOG" id="COG0194">
    <property type="taxonomic scope" value="Bacteria"/>
</dbReference>
<dbReference type="HOGENOM" id="CLU_001715_1_0_5"/>
<dbReference type="OrthoDB" id="9808150at2"/>
<dbReference type="Proteomes" id="UP000001953">
    <property type="component" value="Chromosome"/>
</dbReference>
<dbReference type="GO" id="GO:0005829">
    <property type="term" value="C:cytosol"/>
    <property type="evidence" value="ECO:0007669"/>
    <property type="project" value="TreeGrafter"/>
</dbReference>
<dbReference type="GO" id="GO:0005524">
    <property type="term" value="F:ATP binding"/>
    <property type="evidence" value="ECO:0007669"/>
    <property type="project" value="UniProtKB-UniRule"/>
</dbReference>
<dbReference type="GO" id="GO:0004385">
    <property type="term" value="F:guanylate kinase activity"/>
    <property type="evidence" value="ECO:0007669"/>
    <property type="project" value="UniProtKB-UniRule"/>
</dbReference>
<dbReference type="CDD" id="cd00071">
    <property type="entry name" value="GMPK"/>
    <property type="match status" value="1"/>
</dbReference>
<dbReference type="FunFam" id="3.30.63.10:FF:000002">
    <property type="entry name" value="Guanylate kinase 1"/>
    <property type="match status" value="1"/>
</dbReference>
<dbReference type="Gene3D" id="3.30.63.10">
    <property type="entry name" value="Guanylate Kinase phosphate binding domain"/>
    <property type="match status" value="1"/>
</dbReference>
<dbReference type="Gene3D" id="3.40.50.300">
    <property type="entry name" value="P-loop containing nucleotide triphosphate hydrolases"/>
    <property type="match status" value="1"/>
</dbReference>
<dbReference type="HAMAP" id="MF_00328">
    <property type="entry name" value="Guanylate_kinase"/>
    <property type="match status" value="1"/>
</dbReference>
<dbReference type="InterPro" id="IPR008145">
    <property type="entry name" value="GK/Ca_channel_bsu"/>
</dbReference>
<dbReference type="InterPro" id="IPR008144">
    <property type="entry name" value="Guanylate_kin-like_dom"/>
</dbReference>
<dbReference type="InterPro" id="IPR017665">
    <property type="entry name" value="Guanylate_kinase"/>
</dbReference>
<dbReference type="InterPro" id="IPR020590">
    <property type="entry name" value="Guanylate_kinase_CS"/>
</dbReference>
<dbReference type="InterPro" id="IPR027417">
    <property type="entry name" value="P-loop_NTPase"/>
</dbReference>
<dbReference type="NCBIfam" id="TIGR03263">
    <property type="entry name" value="guanyl_kin"/>
    <property type="match status" value="1"/>
</dbReference>
<dbReference type="PANTHER" id="PTHR23117:SF13">
    <property type="entry name" value="GUANYLATE KINASE"/>
    <property type="match status" value="1"/>
</dbReference>
<dbReference type="PANTHER" id="PTHR23117">
    <property type="entry name" value="GUANYLATE KINASE-RELATED"/>
    <property type="match status" value="1"/>
</dbReference>
<dbReference type="Pfam" id="PF00625">
    <property type="entry name" value="Guanylate_kin"/>
    <property type="match status" value="1"/>
</dbReference>
<dbReference type="SMART" id="SM00072">
    <property type="entry name" value="GuKc"/>
    <property type="match status" value="1"/>
</dbReference>
<dbReference type="SUPFAM" id="SSF52540">
    <property type="entry name" value="P-loop containing nucleoside triphosphate hydrolases"/>
    <property type="match status" value="1"/>
</dbReference>
<dbReference type="PROSITE" id="PS00856">
    <property type="entry name" value="GUANYLATE_KINASE_1"/>
    <property type="match status" value="1"/>
</dbReference>
<dbReference type="PROSITE" id="PS50052">
    <property type="entry name" value="GUANYLATE_KINASE_2"/>
    <property type="match status" value="1"/>
</dbReference>
<feature type="chain" id="PRO_0000266358" description="Guanylate kinase">
    <location>
        <begin position="1"/>
        <end position="219"/>
    </location>
</feature>
<feature type="domain" description="Guanylate kinase-like" evidence="1">
    <location>
        <begin position="15"/>
        <end position="194"/>
    </location>
</feature>
<feature type="binding site" evidence="1">
    <location>
        <begin position="22"/>
        <end position="29"/>
    </location>
    <ligand>
        <name>ATP</name>
        <dbReference type="ChEBI" id="CHEBI:30616"/>
    </ligand>
</feature>
<keyword id="KW-0067">ATP-binding</keyword>
<keyword id="KW-0963">Cytoplasm</keyword>
<keyword id="KW-0418">Kinase</keyword>
<keyword id="KW-0547">Nucleotide-binding</keyword>
<keyword id="KW-1185">Reference proteome</keyword>
<keyword id="KW-0808">Transferase</keyword>